<evidence type="ECO:0000255" key="1">
    <source>
        <dbReference type="HAMAP-Rule" id="MF_01302"/>
    </source>
</evidence>
<evidence type="ECO:0000305" key="2"/>
<feature type="chain" id="PRO_1000140612" description="Small ribosomal subunit protein uS8">
    <location>
        <begin position="1"/>
        <end position="130"/>
    </location>
</feature>
<sequence>MSMQDPIADMLTRIRNGQAAKHVSVKMPSAKLKIAIAKVLKEEGYITDYAVADEAKPELEVTLKYFQGQPVVETIQRVSRPGLRIYKGKNELPKVMGGLGVAIVSTSKGLMTDRTARQNGMGGEVICYVA</sequence>
<dbReference type="EMBL" id="CP000472">
    <property type="protein sequence ID" value="ACJ28781.1"/>
    <property type="molecule type" value="Genomic_DNA"/>
</dbReference>
<dbReference type="RefSeq" id="WP_020912149.1">
    <property type="nucleotide sequence ID" value="NC_011566.1"/>
</dbReference>
<dbReference type="SMR" id="B8CNE7"/>
<dbReference type="STRING" id="225849.swp_2025"/>
<dbReference type="KEGG" id="swp:swp_2025"/>
<dbReference type="eggNOG" id="COG0096">
    <property type="taxonomic scope" value="Bacteria"/>
</dbReference>
<dbReference type="HOGENOM" id="CLU_098428_0_0_6"/>
<dbReference type="OrthoDB" id="9802617at2"/>
<dbReference type="Proteomes" id="UP000000753">
    <property type="component" value="Chromosome"/>
</dbReference>
<dbReference type="GO" id="GO:1990904">
    <property type="term" value="C:ribonucleoprotein complex"/>
    <property type="evidence" value="ECO:0007669"/>
    <property type="project" value="UniProtKB-KW"/>
</dbReference>
<dbReference type="GO" id="GO:0005840">
    <property type="term" value="C:ribosome"/>
    <property type="evidence" value="ECO:0007669"/>
    <property type="project" value="UniProtKB-KW"/>
</dbReference>
<dbReference type="GO" id="GO:0019843">
    <property type="term" value="F:rRNA binding"/>
    <property type="evidence" value="ECO:0007669"/>
    <property type="project" value="UniProtKB-UniRule"/>
</dbReference>
<dbReference type="GO" id="GO:0003735">
    <property type="term" value="F:structural constituent of ribosome"/>
    <property type="evidence" value="ECO:0007669"/>
    <property type="project" value="InterPro"/>
</dbReference>
<dbReference type="GO" id="GO:0006412">
    <property type="term" value="P:translation"/>
    <property type="evidence" value="ECO:0007669"/>
    <property type="project" value="UniProtKB-UniRule"/>
</dbReference>
<dbReference type="FunFam" id="3.30.1370.30:FF:000003">
    <property type="entry name" value="30S ribosomal protein S8"/>
    <property type="match status" value="1"/>
</dbReference>
<dbReference type="FunFam" id="3.30.1490.10:FF:000001">
    <property type="entry name" value="30S ribosomal protein S8"/>
    <property type="match status" value="1"/>
</dbReference>
<dbReference type="Gene3D" id="3.30.1370.30">
    <property type="match status" value="1"/>
</dbReference>
<dbReference type="Gene3D" id="3.30.1490.10">
    <property type="match status" value="1"/>
</dbReference>
<dbReference type="HAMAP" id="MF_01302_B">
    <property type="entry name" value="Ribosomal_uS8_B"/>
    <property type="match status" value="1"/>
</dbReference>
<dbReference type="InterPro" id="IPR000630">
    <property type="entry name" value="Ribosomal_uS8"/>
</dbReference>
<dbReference type="InterPro" id="IPR047863">
    <property type="entry name" value="Ribosomal_uS8_CS"/>
</dbReference>
<dbReference type="InterPro" id="IPR035987">
    <property type="entry name" value="Ribosomal_uS8_sf"/>
</dbReference>
<dbReference type="NCBIfam" id="NF001109">
    <property type="entry name" value="PRK00136.1"/>
    <property type="match status" value="1"/>
</dbReference>
<dbReference type="PANTHER" id="PTHR11758">
    <property type="entry name" value="40S RIBOSOMAL PROTEIN S15A"/>
    <property type="match status" value="1"/>
</dbReference>
<dbReference type="Pfam" id="PF00410">
    <property type="entry name" value="Ribosomal_S8"/>
    <property type="match status" value="1"/>
</dbReference>
<dbReference type="SUPFAM" id="SSF56047">
    <property type="entry name" value="Ribosomal protein S8"/>
    <property type="match status" value="1"/>
</dbReference>
<dbReference type="PROSITE" id="PS00053">
    <property type="entry name" value="RIBOSOMAL_S8"/>
    <property type="match status" value="1"/>
</dbReference>
<name>RS8_SHEPW</name>
<keyword id="KW-0687">Ribonucleoprotein</keyword>
<keyword id="KW-0689">Ribosomal protein</keyword>
<keyword id="KW-0694">RNA-binding</keyword>
<keyword id="KW-0699">rRNA-binding</keyword>
<proteinExistence type="inferred from homology"/>
<reference key="1">
    <citation type="journal article" date="2008" name="PLoS ONE">
        <title>Environmental adaptation: genomic analysis of the piezotolerant and psychrotolerant deep-sea iron reducing bacterium Shewanella piezotolerans WP3.</title>
        <authorList>
            <person name="Wang F."/>
            <person name="Wang J."/>
            <person name="Jian H."/>
            <person name="Zhang B."/>
            <person name="Li S."/>
            <person name="Wang F."/>
            <person name="Zeng X."/>
            <person name="Gao L."/>
            <person name="Bartlett D.H."/>
            <person name="Yu J."/>
            <person name="Hu S."/>
            <person name="Xiao X."/>
        </authorList>
    </citation>
    <scope>NUCLEOTIDE SEQUENCE [LARGE SCALE GENOMIC DNA]</scope>
    <source>
        <strain>WP3 / JCM 13877</strain>
    </source>
</reference>
<protein>
    <recommendedName>
        <fullName evidence="1">Small ribosomal subunit protein uS8</fullName>
    </recommendedName>
    <alternativeName>
        <fullName evidence="2">30S ribosomal protein S8</fullName>
    </alternativeName>
</protein>
<organism>
    <name type="scientific">Shewanella piezotolerans (strain WP3 / JCM 13877)</name>
    <dbReference type="NCBI Taxonomy" id="225849"/>
    <lineage>
        <taxon>Bacteria</taxon>
        <taxon>Pseudomonadati</taxon>
        <taxon>Pseudomonadota</taxon>
        <taxon>Gammaproteobacteria</taxon>
        <taxon>Alteromonadales</taxon>
        <taxon>Shewanellaceae</taxon>
        <taxon>Shewanella</taxon>
    </lineage>
</organism>
<accession>B8CNE7</accession>
<gene>
    <name evidence="1" type="primary">rpsH</name>
    <name type="ordered locus">swp_2025</name>
</gene>
<comment type="function">
    <text evidence="1">One of the primary rRNA binding proteins, it binds directly to 16S rRNA central domain where it helps coordinate assembly of the platform of the 30S subunit.</text>
</comment>
<comment type="subunit">
    <text evidence="1">Part of the 30S ribosomal subunit. Contacts proteins S5 and S12.</text>
</comment>
<comment type="similarity">
    <text evidence="1">Belongs to the universal ribosomal protein uS8 family.</text>
</comment>